<accession>Q3ZZJ0</accession>
<keyword id="KW-0067">ATP-binding</keyword>
<keyword id="KW-0963">Cytoplasm</keyword>
<keyword id="KW-0418">Kinase</keyword>
<keyword id="KW-0520">NAD</keyword>
<keyword id="KW-0521">NADP</keyword>
<keyword id="KW-0547">Nucleotide-binding</keyword>
<keyword id="KW-0808">Transferase</keyword>
<name>NADK_DEHMC</name>
<evidence type="ECO:0000255" key="1">
    <source>
        <dbReference type="HAMAP-Rule" id="MF_00361"/>
    </source>
</evidence>
<feature type="chain" id="PRO_0000229631" description="NAD kinase">
    <location>
        <begin position="1"/>
        <end position="284"/>
    </location>
</feature>
<feature type="active site" description="Proton acceptor" evidence="1">
    <location>
        <position position="61"/>
    </location>
</feature>
<feature type="binding site" evidence="1">
    <location>
        <begin position="61"/>
        <end position="62"/>
    </location>
    <ligand>
        <name>NAD(+)</name>
        <dbReference type="ChEBI" id="CHEBI:57540"/>
    </ligand>
</feature>
<feature type="binding site" evidence="1">
    <location>
        <position position="66"/>
    </location>
    <ligand>
        <name>NAD(+)</name>
        <dbReference type="ChEBI" id="CHEBI:57540"/>
    </ligand>
</feature>
<feature type="binding site" evidence="1">
    <location>
        <begin position="136"/>
        <end position="137"/>
    </location>
    <ligand>
        <name>NAD(+)</name>
        <dbReference type="ChEBI" id="CHEBI:57540"/>
    </ligand>
</feature>
<feature type="binding site" evidence="1">
    <location>
        <position position="147"/>
    </location>
    <ligand>
        <name>NAD(+)</name>
        <dbReference type="ChEBI" id="CHEBI:57540"/>
    </ligand>
</feature>
<feature type="binding site" evidence="1">
    <location>
        <position position="164"/>
    </location>
    <ligand>
        <name>NAD(+)</name>
        <dbReference type="ChEBI" id="CHEBI:57540"/>
    </ligand>
</feature>
<feature type="binding site" evidence="1">
    <location>
        <position position="166"/>
    </location>
    <ligand>
        <name>NAD(+)</name>
        <dbReference type="ChEBI" id="CHEBI:57540"/>
    </ligand>
</feature>
<feature type="binding site" evidence="1">
    <location>
        <position position="201"/>
    </location>
    <ligand>
        <name>NAD(+)</name>
        <dbReference type="ChEBI" id="CHEBI:57540"/>
    </ligand>
</feature>
<comment type="function">
    <text evidence="1">Involved in the regulation of the intracellular balance of NAD and NADP, and is a key enzyme in the biosynthesis of NADP. Catalyzes specifically the phosphorylation on 2'-hydroxyl of the adenosine moiety of NAD to yield NADP.</text>
</comment>
<comment type="catalytic activity">
    <reaction evidence="1">
        <text>NAD(+) + ATP = ADP + NADP(+) + H(+)</text>
        <dbReference type="Rhea" id="RHEA:18629"/>
        <dbReference type="ChEBI" id="CHEBI:15378"/>
        <dbReference type="ChEBI" id="CHEBI:30616"/>
        <dbReference type="ChEBI" id="CHEBI:57540"/>
        <dbReference type="ChEBI" id="CHEBI:58349"/>
        <dbReference type="ChEBI" id="CHEBI:456216"/>
        <dbReference type="EC" id="2.7.1.23"/>
    </reaction>
</comment>
<comment type="cofactor">
    <cofactor evidence="1">
        <name>a divalent metal cation</name>
        <dbReference type="ChEBI" id="CHEBI:60240"/>
    </cofactor>
</comment>
<comment type="subcellular location">
    <subcellularLocation>
        <location evidence="1">Cytoplasm</location>
    </subcellularLocation>
</comment>
<comment type="similarity">
    <text evidence="1">Belongs to the NAD kinase family.</text>
</comment>
<organism>
    <name type="scientific">Dehalococcoides mccartyi (strain CBDB1)</name>
    <dbReference type="NCBI Taxonomy" id="255470"/>
    <lineage>
        <taxon>Bacteria</taxon>
        <taxon>Bacillati</taxon>
        <taxon>Chloroflexota</taxon>
        <taxon>Dehalococcoidia</taxon>
        <taxon>Dehalococcoidales</taxon>
        <taxon>Dehalococcoidaceae</taxon>
        <taxon>Dehalococcoides</taxon>
    </lineage>
</organism>
<sequence length="284" mass="31097">MYKKIGIIYHPLNPAACDLAIKLTAKLDSLGIENWSDSAWQADKLTSKMQNTQLIFTTGGDGTILRTAHAILPLEIPILSVNLGKVGFMTELSPEDAISGLEKVLAGDGWIDERSLLEAEYLPHDSAQSRQFFVMNDAVVARGQVARVICVSVDINSQPFTTYKADGAIVSTATGSTGYSYAAGGPVLQPNSADIILTPILPHLGRGYSLVLPSDSTVDLQVNTWHEATLSIDGFINMQVSSGDTLRLRRSSKKVKFMRLRPNNYFYKELDTKLKGNNESVYDR</sequence>
<protein>
    <recommendedName>
        <fullName evidence="1">NAD kinase</fullName>
        <ecNumber evidence="1">2.7.1.23</ecNumber>
    </recommendedName>
    <alternativeName>
        <fullName evidence="1">ATP-dependent NAD kinase</fullName>
    </alternativeName>
</protein>
<dbReference type="EC" id="2.7.1.23" evidence="1"/>
<dbReference type="EMBL" id="AJ965256">
    <property type="protein sequence ID" value="CAI82623.1"/>
    <property type="molecule type" value="Genomic_DNA"/>
</dbReference>
<dbReference type="RefSeq" id="WP_011308980.1">
    <property type="nucleotide sequence ID" value="NC_007356.1"/>
</dbReference>
<dbReference type="SMR" id="Q3ZZJ0"/>
<dbReference type="KEGG" id="deh:cbdbA419"/>
<dbReference type="HOGENOM" id="CLU_008831_0_0_0"/>
<dbReference type="Proteomes" id="UP000000433">
    <property type="component" value="Chromosome"/>
</dbReference>
<dbReference type="GO" id="GO:0005737">
    <property type="term" value="C:cytoplasm"/>
    <property type="evidence" value="ECO:0007669"/>
    <property type="project" value="UniProtKB-SubCell"/>
</dbReference>
<dbReference type="GO" id="GO:0005524">
    <property type="term" value="F:ATP binding"/>
    <property type="evidence" value="ECO:0007669"/>
    <property type="project" value="UniProtKB-KW"/>
</dbReference>
<dbReference type="GO" id="GO:0046872">
    <property type="term" value="F:metal ion binding"/>
    <property type="evidence" value="ECO:0007669"/>
    <property type="project" value="UniProtKB-UniRule"/>
</dbReference>
<dbReference type="GO" id="GO:0051287">
    <property type="term" value="F:NAD binding"/>
    <property type="evidence" value="ECO:0007669"/>
    <property type="project" value="UniProtKB-ARBA"/>
</dbReference>
<dbReference type="GO" id="GO:0003951">
    <property type="term" value="F:NAD+ kinase activity"/>
    <property type="evidence" value="ECO:0007669"/>
    <property type="project" value="UniProtKB-UniRule"/>
</dbReference>
<dbReference type="GO" id="GO:0019674">
    <property type="term" value="P:NAD metabolic process"/>
    <property type="evidence" value="ECO:0007669"/>
    <property type="project" value="InterPro"/>
</dbReference>
<dbReference type="GO" id="GO:0006741">
    <property type="term" value="P:NADP biosynthetic process"/>
    <property type="evidence" value="ECO:0007669"/>
    <property type="project" value="UniProtKB-UniRule"/>
</dbReference>
<dbReference type="Gene3D" id="3.40.50.10330">
    <property type="entry name" value="Probable inorganic polyphosphate/atp-NAD kinase, domain 1"/>
    <property type="match status" value="1"/>
</dbReference>
<dbReference type="Gene3D" id="2.60.200.30">
    <property type="entry name" value="Probable inorganic polyphosphate/atp-NAD kinase, domain 2"/>
    <property type="match status" value="1"/>
</dbReference>
<dbReference type="HAMAP" id="MF_00361">
    <property type="entry name" value="NAD_kinase"/>
    <property type="match status" value="1"/>
</dbReference>
<dbReference type="InterPro" id="IPR017438">
    <property type="entry name" value="ATP-NAD_kinase_N"/>
</dbReference>
<dbReference type="InterPro" id="IPR017437">
    <property type="entry name" value="ATP-NAD_kinase_PpnK-typ_C"/>
</dbReference>
<dbReference type="InterPro" id="IPR016064">
    <property type="entry name" value="NAD/diacylglycerol_kinase_sf"/>
</dbReference>
<dbReference type="InterPro" id="IPR002504">
    <property type="entry name" value="NADK"/>
</dbReference>
<dbReference type="PANTHER" id="PTHR20275">
    <property type="entry name" value="NAD KINASE"/>
    <property type="match status" value="1"/>
</dbReference>
<dbReference type="PANTHER" id="PTHR20275:SF0">
    <property type="entry name" value="NAD KINASE"/>
    <property type="match status" value="1"/>
</dbReference>
<dbReference type="Pfam" id="PF01513">
    <property type="entry name" value="NAD_kinase"/>
    <property type="match status" value="1"/>
</dbReference>
<dbReference type="Pfam" id="PF20143">
    <property type="entry name" value="NAD_kinase_C"/>
    <property type="match status" value="1"/>
</dbReference>
<dbReference type="SUPFAM" id="SSF111331">
    <property type="entry name" value="NAD kinase/diacylglycerol kinase-like"/>
    <property type="match status" value="1"/>
</dbReference>
<reference key="1">
    <citation type="journal article" date="2005" name="Nat. Biotechnol.">
        <title>Genome sequence of the chlorinated compound-respiring bacterium Dehalococcoides species strain CBDB1.</title>
        <authorList>
            <person name="Kube M."/>
            <person name="Beck A."/>
            <person name="Zinder S.H."/>
            <person name="Kuhl H."/>
            <person name="Reinhardt R."/>
            <person name="Adrian L."/>
        </authorList>
    </citation>
    <scope>NUCLEOTIDE SEQUENCE [LARGE SCALE GENOMIC DNA]</scope>
    <source>
        <strain>CBDB1</strain>
    </source>
</reference>
<gene>
    <name evidence="1" type="primary">nadK</name>
    <name type="ordered locus">cbdbA419</name>
</gene>
<proteinExistence type="inferred from homology"/>